<proteinExistence type="evidence at transcript level"/>
<organism>
    <name type="scientific">Oryza sativa subsp. japonica</name>
    <name type="common">Rice</name>
    <dbReference type="NCBI Taxonomy" id="39947"/>
    <lineage>
        <taxon>Eukaryota</taxon>
        <taxon>Viridiplantae</taxon>
        <taxon>Streptophyta</taxon>
        <taxon>Embryophyta</taxon>
        <taxon>Tracheophyta</taxon>
        <taxon>Spermatophyta</taxon>
        <taxon>Magnoliopsida</taxon>
        <taxon>Liliopsida</taxon>
        <taxon>Poales</taxon>
        <taxon>Poaceae</taxon>
        <taxon>BOP clade</taxon>
        <taxon>Oryzoideae</taxon>
        <taxon>Oryzeae</taxon>
        <taxon>Oryzinae</taxon>
        <taxon>Oryza</taxon>
        <taxon>Oryza sativa</taxon>
    </lineage>
</organism>
<accession>Q6K6K7</accession>
<accession>B9F062</accession>
<accession>Q6K6K5</accession>
<accession>Q6K6K6</accession>
<evidence type="ECO:0000250" key="1"/>
<evidence type="ECO:0000303" key="2">
    <source>
    </source>
</evidence>
<evidence type="ECO:0000305" key="3"/>
<keyword id="KW-0025">Alternative splicing</keyword>
<keyword id="KW-0067">ATP-binding</keyword>
<keyword id="KW-0479">Metal-binding</keyword>
<keyword id="KW-0547">Nucleotide-binding</keyword>
<keyword id="KW-1185">Reference proteome</keyword>
<keyword id="KW-0833">Ubl conjugation pathway</keyword>
<keyword id="KW-0862">Zinc</keyword>
<name>UBA5_ORYSJ</name>
<sequence>MDEEQLRALLRDLDALKQRPDPAAIDRMRERVAGMVTPAAAARSKIKDMSSEVVDSNPYSRLMALQRMGIVDNYERIRDYSIAIVGIGGVGSVAAEMLTRCGIGRLLLYDYDTVELANMNRLFFRPDQVGMTKTDAAVQTLSGINPDVTLESYSLNITTVKGFETFLGSLKARSSDGRNTGVDLVLSCVDNYEARMVVNQACNELGQTWMESGVSEDAVSGHIQLLVPGETACFACAPPLVVASGVDERTLKREGVCAASLPTTMGVVAGLLVQNALKYLLKFGQVSPYLGYNSLKDYFPTMEMKPNPQCSNPACVQRQKEYMQSKPARDAAAKAKMEAEASAADECPVHLDNDWNISVVDDSDTVTPSILSTGADSLPEGLVRELPTADSYQEPVAPVTSGAIDDDLEELQRQLDALNSS</sequence>
<dbReference type="EMBL" id="AP005066">
    <property type="protein sequence ID" value="BAD23174.1"/>
    <property type="molecule type" value="Genomic_DNA"/>
</dbReference>
<dbReference type="EMBL" id="AP005066">
    <property type="protein sequence ID" value="BAD23175.1"/>
    <property type="molecule type" value="Genomic_DNA"/>
</dbReference>
<dbReference type="EMBL" id="AP005066">
    <property type="protein sequence ID" value="BAD23176.1"/>
    <property type="molecule type" value="Genomic_DNA"/>
</dbReference>
<dbReference type="EMBL" id="AP008208">
    <property type="protein sequence ID" value="BAF08833.1"/>
    <property type="molecule type" value="Genomic_DNA"/>
</dbReference>
<dbReference type="EMBL" id="AP014958">
    <property type="protein sequence ID" value="BAS78830.1"/>
    <property type="molecule type" value="Genomic_DNA"/>
</dbReference>
<dbReference type="EMBL" id="AP014958">
    <property type="protein sequence ID" value="BAS78831.1"/>
    <property type="molecule type" value="Genomic_DNA"/>
</dbReference>
<dbReference type="EMBL" id="AP014958">
    <property type="protein sequence ID" value="BAS78832.1"/>
    <property type="molecule type" value="Genomic_DNA"/>
</dbReference>
<dbReference type="EMBL" id="CM000139">
    <property type="protein sequence ID" value="EEE57054.1"/>
    <property type="status" value="ALT_SEQ"/>
    <property type="molecule type" value="Genomic_DNA"/>
</dbReference>
<dbReference type="EMBL" id="AK062572">
    <property type="protein sequence ID" value="BAG88369.1"/>
    <property type="molecule type" value="mRNA"/>
</dbReference>
<dbReference type="EMBL" id="AK063549">
    <property type="protein sequence ID" value="BAG88762.1"/>
    <property type="molecule type" value="mRNA"/>
</dbReference>
<dbReference type="EMBL" id="AK101016">
    <property type="status" value="NOT_ANNOTATED_CDS"/>
    <property type="molecule type" value="mRNA"/>
</dbReference>
<dbReference type="RefSeq" id="XP_015625906.1">
    <property type="nucleotide sequence ID" value="XM_015770420.1"/>
</dbReference>
<dbReference type="RefSeq" id="XP_015625907.1">
    <property type="nucleotide sequence ID" value="XM_015770421.1"/>
</dbReference>
<dbReference type="SMR" id="Q6K6K7"/>
<dbReference type="FunCoup" id="Q6K6K7">
    <property type="interactions" value="3063"/>
</dbReference>
<dbReference type="STRING" id="39947.Q6K6K7"/>
<dbReference type="PaxDb" id="39947-Q6K6K7"/>
<dbReference type="EnsemblPlants" id="Os02t0506500-04">
    <molecule id="Q6K6K7-1"/>
    <property type="protein sequence ID" value="Os02t0506500-04"/>
    <property type="gene ID" value="Os02g0506500"/>
</dbReference>
<dbReference type="Gramene" id="Os02t0506500-04">
    <molecule id="Q6K6K7-1"/>
    <property type="protein sequence ID" value="Os02t0506500-04"/>
    <property type="gene ID" value="Os02g0506500"/>
</dbReference>
<dbReference type="KEGG" id="dosa:Os02g0506500"/>
<dbReference type="eggNOG" id="KOG2336">
    <property type="taxonomic scope" value="Eukaryota"/>
</dbReference>
<dbReference type="InParanoid" id="Q6K6K7"/>
<dbReference type="OMA" id="MNIVKDY"/>
<dbReference type="OrthoDB" id="681953at2759"/>
<dbReference type="Proteomes" id="UP000000763">
    <property type="component" value="Chromosome 2"/>
</dbReference>
<dbReference type="Proteomes" id="UP000007752">
    <property type="component" value="Chromosome 2"/>
</dbReference>
<dbReference type="Proteomes" id="UP000059680">
    <property type="component" value="Chromosome 2"/>
</dbReference>
<dbReference type="ExpressionAtlas" id="Q6K6K7">
    <property type="expression patterns" value="baseline and differential"/>
</dbReference>
<dbReference type="GO" id="GO:0005737">
    <property type="term" value="C:cytoplasm"/>
    <property type="evidence" value="ECO:0000318"/>
    <property type="project" value="GO_Central"/>
</dbReference>
<dbReference type="GO" id="GO:0005829">
    <property type="term" value="C:cytosol"/>
    <property type="evidence" value="ECO:0000318"/>
    <property type="project" value="GO_Central"/>
</dbReference>
<dbReference type="GO" id="GO:0005524">
    <property type="term" value="F:ATP binding"/>
    <property type="evidence" value="ECO:0007669"/>
    <property type="project" value="UniProtKB-KW"/>
</dbReference>
<dbReference type="GO" id="GO:0046872">
    <property type="term" value="F:metal ion binding"/>
    <property type="evidence" value="ECO:0007669"/>
    <property type="project" value="UniProtKB-KW"/>
</dbReference>
<dbReference type="GO" id="GO:0071566">
    <property type="term" value="F:UFM1 activating enzyme activity"/>
    <property type="evidence" value="ECO:0000318"/>
    <property type="project" value="GO_Central"/>
</dbReference>
<dbReference type="GO" id="GO:0071569">
    <property type="term" value="P:protein ufmylation"/>
    <property type="evidence" value="ECO:0000318"/>
    <property type="project" value="GO_Central"/>
</dbReference>
<dbReference type="CDD" id="cd00757">
    <property type="entry name" value="ThiF_MoeB_HesA_family"/>
    <property type="match status" value="1"/>
</dbReference>
<dbReference type="FunFam" id="3.40.50.720:FF:000066">
    <property type="entry name" value="Putative ubiquitin-like modifier-activating enzyme 5"/>
    <property type="match status" value="1"/>
</dbReference>
<dbReference type="Gene3D" id="3.40.50.720">
    <property type="entry name" value="NAD(P)-binding Rossmann-like Domain"/>
    <property type="match status" value="1"/>
</dbReference>
<dbReference type="InterPro" id="IPR029752">
    <property type="entry name" value="D-isomer_DH_CS1"/>
</dbReference>
<dbReference type="InterPro" id="IPR045886">
    <property type="entry name" value="ThiF/MoeB/HesA"/>
</dbReference>
<dbReference type="InterPro" id="IPR000594">
    <property type="entry name" value="ThiF_NAD_FAD-bd"/>
</dbReference>
<dbReference type="InterPro" id="IPR035985">
    <property type="entry name" value="Ubiquitin-activating_enz"/>
</dbReference>
<dbReference type="PANTHER" id="PTHR10953">
    <property type="entry name" value="UBIQUITIN-ACTIVATING ENZYME E1"/>
    <property type="match status" value="1"/>
</dbReference>
<dbReference type="PANTHER" id="PTHR10953:SF9">
    <property type="entry name" value="UBIQUITIN-LIKE MODIFIER-ACTIVATING ENZYME 5"/>
    <property type="match status" value="1"/>
</dbReference>
<dbReference type="Pfam" id="PF00899">
    <property type="entry name" value="ThiF"/>
    <property type="match status" value="1"/>
</dbReference>
<dbReference type="SUPFAM" id="SSF69572">
    <property type="entry name" value="Activating enzymes of the ubiquitin-like proteins"/>
    <property type="match status" value="1"/>
</dbReference>
<feature type="chain" id="PRO_0000391954" description="Ubiquitin-like modifier-activating enzyme 5">
    <location>
        <begin position="1"/>
        <end position="421"/>
    </location>
</feature>
<feature type="active site" description="Glycyl thioester intermediate" evidence="1">
    <location>
        <position position="257"/>
    </location>
</feature>
<feature type="binding site" evidence="1">
    <location>
        <position position="89"/>
    </location>
    <ligand>
        <name>ATP</name>
        <dbReference type="ChEBI" id="CHEBI:30616"/>
    </ligand>
</feature>
<feature type="binding site" evidence="1">
    <location>
        <position position="110"/>
    </location>
    <ligand>
        <name>ATP</name>
        <dbReference type="ChEBI" id="CHEBI:30616"/>
    </ligand>
</feature>
<feature type="binding site" evidence="1">
    <location>
        <position position="133"/>
    </location>
    <ligand>
        <name>ATP</name>
        <dbReference type="ChEBI" id="CHEBI:30616"/>
    </ligand>
</feature>
<feature type="binding site" evidence="1">
    <location>
        <position position="156"/>
    </location>
    <ligand>
        <name>ATP</name>
        <dbReference type="ChEBI" id="CHEBI:30616"/>
    </ligand>
</feature>
<feature type="binding site" evidence="1">
    <location>
        <position position="191"/>
    </location>
    <ligand>
        <name>ATP</name>
        <dbReference type="ChEBI" id="CHEBI:30616"/>
    </ligand>
</feature>
<feature type="binding site" evidence="1">
    <location>
        <position position="233"/>
    </location>
    <ligand>
        <name>Zn(2+)</name>
        <dbReference type="ChEBI" id="CHEBI:29105"/>
    </ligand>
</feature>
<feature type="binding site" evidence="1">
    <location>
        <position position="236"/>
    </location>
    <ligand>
        <name>Zn(2+)</name>
        <dbReference type="ChEBI" id="CHEBI:29105"/>
    </ligand>
</feature>
<feature type="binding site" evidence="1">
    <location>
        <position position="310"/>
    </location>
    <ligand>
        <name>Zn(2+)</name>
        <dbReference type="ChEBI" id="CHEBI:29105"/>
    </ligand>
</feature>
<feature type="binding site" evidence="1">
    <location>
        <position position="315"/>
    </location>
    <ligand>
        <name>Zn(2+)</name>
        <dbReference type="ChEBI" id="CHEBI:29105"/>
    </ligand>
</feature>
<feature type="splice variant" id="VSP_038771" description="In isoform 2." evidence="2">
    <location>
        <begin position="28"/>
        <end position="47"/>
    </location>
</feature>
<feature type="splice variant" id="VSP_038772" description="In isoform 3." evidence="2">
    <original>SVVDDSDTVTPSILSTGADSLPEGLVRELPTADSYQEPV</original>
    <variation>RFSCHTNGADKIVDLDRTLYPMLKPTSFLKHPACRIACV</variation>
    <location>
        <begin position="358"/>
        <end position="396"/>
    </location>
</feature>
<feature type="splice variant" id="VSP_038773" description="In isoform 3." evidence="2">
    <location>
        <begin position="397"/>
        <end position="421"/>
    </location>
</feature>
<feature type="sequence conflict" description="In Ref. 5; AK101016." evidence="3" ref="5">
    <original>P</original>
    <variation>S</variation>
    <location>
        <position position="38"/>
    </location>
</feature>
<gene>
    <name type="ordered locus">Os02g0506500</name>
    <name type="ordered locus">LOC_Os02g30310</name>
    <name type="ORF">OsJ_06853</name>
    <name type="ORF">P0047E05.15</name>
</gene>
<reference key="1">
    <citation type="journal article" date="2005" name="Nature">
        <title>The map-based sequence of the rice genome.</title>
        <authorList>
            <consortium name="International rice genome sequencing project (IRGSP)"/>
        </authorList>
    </citation>
    <scope>NUCLEOTIDE SEQUENCE [LARGE SCALE GENOMIC DNA]</scope>
    <source>
        <strain>cv. Nipponbare</strain>
    </source>
</reference>
<reference key="2">
    <citation type="journal article" date="2008" name="Nucleic Acids Res.">
        <title>The rice annotation project database (RAP-DB): 2008 update.</title>
        <authorList>
            <consortium name="The rice annotation project (RAP)"/>
        </authorList>
    </citation>
    <scope>GENOME REANNOTATION</scope>
    <source>
        <strain>cv. Nipponbare</strain>
    </source>
</reference>
<reference key="3">
    <citation type="journal article" date="2013" name="Rice">
        <title>Improvement of the Oryza sativa Nipponbare reference genome using next generation sequence and optical map data.</title>
        <authorList>
            <person name="Kawahara Y."/>
            <person name="de la Bastide M."/>
            <person name="Hamilton J.P."/>
            <person name="Kanamori H."/>
            <person name="McCombie W.R."/>
            <person name="Ouyang S."/>
            <person name="Schwartz D.C."/>
            <person name="Tanaka T."/>
            <person name="Wu J."/>
            <person name="Zhou S."/>
            <person name="Childs K.L."/>
            <person name="Davidson R.M."/>
            <person name="Lin H."/>
            <person name="Quesada-Ocampo L."/>
            <person name="Vaillancourt B."/>
            <person name="Sakai H."/>
            <person name="Lee S.S."/>
            <person name="Kim J."/>
            <person name="Numa H."/>
            <person name="Itoh T."/>
            <person name="Buell C.R."/>
            <person name="Matsumoto T."/>
        </authorList>
    </citation>
    <scope>GENOME REANNOTATION</scope>
    <source>
        <strain>cv. Nipponbare</strain>
    </source>
</reference>
<reference key="4">
    <citation type="journal article" date="2005" name="PLoS Biol.">
        <title>The genomes of Oryza sativa: a history of duplications.</title>
        <authorList>
            <person name="Yu J."/>
            <person name="Wang J."/>
            <person name="Lin W."/>
            <person name="Li S."/>
            <person name="Li H."/>
            <person name="Zhou J."/>
            <person name="Ni P."/>
            <person name="Dong W."/>
            <person name="Hu S."/>
            <person name="Zeng C."/>
            <person name="Zhang J."/>
            <person name="Zhang Y."/>
            <person name="Li R."/>
            <person name="Xu Z."/>
            <person name="Li S."/>
            <person name="Li X."/>
            <person name="Zheng H."/>
            <person name="Cong L."/>
            <person name="Lin L."/>
            <person name="Yin J."/>
            <person name="Geng J."/>
            <person name="Li G."/>
            <person name="Shi J."/>
            <person name="Liu J."/>
            <person name="Lv H."/>
            <person name="Li J."/>
            <person name="Wang J."/>
            <person name="Deng Y."/>
            <person name="Ran L."/>
            <person name="Shi X."/>
            <person name="Wang X."/>
            <person name="Wu Q."/>
            <person name="Li C."/>
            <person name="Ren X."/>
            <person name="Wang J."/>
            <person name="Wang X."/>
            <person name="Li D."/>
            <person name="Liu D."/>
            <person name="Zhang X."/>
            <person name="Ji Z."/>
            <person name="Zhao W."/>
            <person name="Sun Y."/>
            <person name="Zhang Z."/>
            <person name="Bao J."/>
            <person name="Han Y."/>
            <person name="Dong L."/>
            <person name="Ji J."/>
            <person name="Chen P."/>
            <person name="Wu S."/>
            <person name="Liu J."/>
            <person name="Xiao Y."/>
            <person name="Bu D."/>
            <person name="Tan J."/>
            <person name="Yang L."/>
            <person name="Ye C."/>
            <person name="Zhang J."/>
            <person name="Xu J."/>
            <person name="Zhou Y."/>
            <person name="Yu Y."/>
            <person name="Zhang B."/>
            <person name="Zhuang S."/>
            <person name="Wei H."/>
            <person name="Liu B."/>
            <person name="Lei M."/>
            <person name="Yu H."/>
            <person name="Li Y."/>
            <person name="Xu H."/>
            <person name="Wei S."/>
            <person name="He X."/>
            <person name="Fang L."/>
            <person name="Zhang Z."/>
            <person name="Zhang Y."/>
            <person name="Huang X."/>
            <person name="Su Z."/>
            <person name="Tong W."/>
            <person name="Li J."/>
            <person name="Tong Z."/>
            <person name="Li S."/>
            <person name="Ye J."/>
            <person name="Wang L."/>
            <person name="Fang L."/>
            <person name="Lei T."/>
            <person name="Chen C.-S."/>
            <person name="Chen H.-C."/>
            <person name="Xu Z."/>
            <person name="Li H."/>
            <person name="Huang H."/>
            <person name="Zhang F."/>
            <person name="Xu H."/>
            <person name="Li N."/>
            <person name="Zhao C."/>
            <person name="Li S."/>
            <person name="Dong L."/>
            <person name="Huang Y."/>
            <person name="Li L."/>
            <person name="Xi Y."/>
            <person name="Qi Q."/>
            <person name="Li W."/>
            <person name="Zhang B."/>
            <person name="Hu W."/>
            <person name="Zhang Y."/>
            <person name="Tian X."/>
            <person name="Jiao Y."/>
            <person name="Liang X."/>
            <person name="Jin J."/>
            <person name="Gao L."/>
            <person name="Zheng W."/>
            <person name="Hao B."/>
            <person name="Liu S.-M."/>
            <person name="Wang W."/>
            <person name="Yuan L."/>
            <person name="Cao M."/>
            <person name="McDermott J."/>
            <person name="Samudrala R."/>
            <person name="Wang J."/>
            <person name="Wong G.K.-S."/>
            <person name="Yang H."/>
        </authorList>
    </citation>
    <scope>NUCLEOTIDE SEQUENCE [LARGE SCALE GENOMIC DNA]</scope>
    <source>
        <strain>cv. Nipponbare</strain>
    </source>
</reference>
<reference key="5">
    <citation type="journal article" date="2003" name="Science">
        <title>Collection, mapping, and annotation of over 28,000 cDNA clones from japonica rice.</title>
        <authorList>
            <consortium name="The rice full-length cDNA consortium"/>
        </authorList>
    </citation>
    <scope>NUCLEOTIDE SEQUENCE [LARGE SCALE MRNA] (ISOFORMS 1; 2 AND 3)</scope>
    <source>
        <strain>cv. Nipponbare</strain>
    </source>
</reference>
<comment type="function">
    <text evidence="1">E1-like enzyme which activates UFM1.</text>
</comment>
<comment type="alternative products">
    <event type="alternative splicing"/>
    <isoform>
        <id>Q6K6K7-1</id>
        <name>1</name>
        <sequence type="displayed"/>
    </isoform>
    <isoform>
        <id>Q6K6K7-2</id>
        <name>2</name>
        <sequence type="described" ref="VSP_038771"/>
    </isoform>
    <isoform>
        <id>Q6K6K7-3</id>
        <name>3</name>
        <sequence type="described" ref="VSP_038772 VSP_038773"/>
    </isoform>
</comment>
<comment type="similarity">
    <text evidence="3">Belongs to the ubiquitin-activating E1 family. UBA5 subfamily.</text>
</comment>
<comment type="sequence caution" evidence="3">
    <conflict type="erroneous gene model prediction">
        <sequence resource="EMBL-CDS" id="EEE57054"/>
    </conflict>
</comment>
<protein>
    <recommendedName>
        <fullName>Ubiquitin-like modifier-activating enzyme 5</fullName>
        <shortName>Ubiquitin-activating enzyme 5</shortName>
    </recommendedName>
</protein>